<feature type="chain" id="PRO_0000264764" description="Acetylglutamate kinase">
    <location>
        <begin position="1"/>
        <end position="302"/>
    </location>
</feature>
<feature type="binding site" evidence="1">
    <location>
        <begin position="73"/>
        <end position="74"/>
    </location>
    <ligand>
        <name>substrate</name>
    </ligand>
</feature>
<feature type="binding site" evidence="1">
    <location>
        <position position="95"/>
    </location>
    <ligand>
        <name>substrate</name>
    </ligand>
</feature>
<feature type="binding site" evidence="1">
    <location>
        <position position="200"/>
    </location>
    <ligand>
        <name>substrate</name>
    </ligand>
</feature>
<feature type="site" description="Transition state stabilizer" evidence="1">
    <location>
        <position position="38"/>
    </location>
</feature>
<feature type="site" description="Transition state stabilizer" evidence="1">
    <location>
        <position position="260"/>
    </location>
</feature>
<gene>
    <name evidence="1" type="primary">argB</name>
    <name type="ordered locus">Sala_3095</name>
</gene>
<comment type="function">
    <text evidence="1">Catalyzes the ATP-dependent phosphorylation of N-acetyl-L-glutamate.</text>
</comment>
<comment type="catalytic activity">
    <reaction evidence="1">
        <text>N-acetyl-L-glutamate + ATP = N-acetyl-L-glutamyl 5-phosphate + ADP</text>
        <dbReference type="Rhea" id="RHEA:14629"/>
        <dbReference type="ChEBI" id="CHEBI:30616"/>
        <dbReference type="ChEBI" id="CHEBI:44337"/>
        <dbReference type="ChEBI" id="CHEBI:57936"/>
        <dbReference type="ChEBI" id="CHEBI:456216"/>
        <dbReference type="EC" id="2.7.2.8"/>
    </reaction>
</comment>
<comment type="pathway">
    <text evidence="1">Amino-acid biosynthesis; L-arginine biosynthesis; N(2)-acetyl-L-ornithine from L-glutamate: step 2/4.</text>
</comment>
<comment type="subcellular location">
    <subcellularLocation>
        <location evidence="1">Cytoplasm</location>
    </subcellularLocation>
</comment>
<comment type="similarity">
    <text evidence="1">Belongs to the acetylglutamate kinase family. ArgB subfamily.</text>
</comment>
<keyword id="KW-0028">Amino-acid biosynthesis</keyword>
<keyword id="KW-0055">Arginine biosynthesis</keyword>
<keyword id="KW-0067">ATP-binding</keyword>
<keyword id="KW-0963">Cytoplasm</keyword>
<keyword id="KW-0418">Kinase</keyword>
<keyword id="KW-0547">Nucleotide-binding</keyword>
<keyword id="KW-1185">Reference proteome</keyword>
<keyword id="KW-0808">Transferase</keyword>
<organism>
    <name type="scientific">Sphingopyxis alaskensis (strain DSM 13593 / LMG 18877 / RB2256)</name>
    <name type="common">Sphingomonas alaskensis</name>
    <dbReference type="NCBI Taxonomy" id="317655"/>
    <lineage>
        <taxon>Bacteria</taxon>
        <taxon>Pseudomonadati</taxon>
        <taxon>Pseudomonadota</taxon>
        <taxon>Alphaproteobacteria</taxon>
        <taxon>Sphingomonadales</taxon>
        <taxon>Sphingomonadaceae</taxon>
        <taxon>Sphingopyxis</taxon>
    </lineage>
</organism>
<accession>Q1GNH3</accession>
<name>ARGB_SPHAL</name>
<proteinExistence type="inferred from homology"/>
<evidence type="ECO:0000255" key="1">
    <source>
        <dbReference type="HAMAP-Rule" id="MF_00082"/>
    </source>
</evidence>
<reference key="1">
    <citation type="journal article" date="2009" name="Proc. Natl. Acad. Sci. U.S.A.">
        <title>The genomic basis of trophic strategy in marine bacteria.</title>
        <authorList>
            <person name="Lauro F.M."/>
            <person name="McDougald D."/>
            <person name="Thomas T."/>
            <person name="Williams T.J."/>
            <person name="Egan S."/>
            <person name="Rice S."/>
            <person name="DeMaere M.Z."/>
            <person name="Ting L."/>
            <person name="Ertan H."/>
            <person name="Johnson J."/>
            <person name="Ferriera S."/>
            <person name="Lapidus A."/>
            <person name="Anderson I."/>
            <person name="Kyrpides N."/>
            <person name="Munk A.C."/>
            <person name="Detter C."/>
            <person name="Han C.S."/>
            <person name="Brown M.V."/>
            <person name="Robb F.T."/>
            <person name="Kjelleberg S."/>
            <person name="Cavicchioli R."/>
        </authorList>
    </citation>
    <scope>NUCLEOTIDE SEQUENCE [LARGE SCALE GENOMIC DNA]</scope>
    <source>
        <strain>DSM 13593 / LMG 18877 / RB2256</strain>
    </source>
</reference>
<dbReference type="EC" id="2.7.2.8" evidence="1"/>
<dbReference type="EMBL" id="CP000356">
    <property type="protein sequence ID" value="ABF54799.1"/>
    <property type="molecule type" value="Genomic_DNA"/>
</dbReference>
<dbReference type="RefSeq" id="WP_011543361.1">
    <property type="nucleotide sequence ID" value="NC_008048.1"/>
</dbReference>
<dbReference type="SMR" id="Q1GNH3"/>
<dbReference type="STRING" id="317655.Sala_3095"/>
<dbReference type="KEGG" id="sal:Sala_3095"/>
<dbReference type="eggNOG" id="COG0548">
    <property type="taxonomic scope" value="Bacteria"/>
</dbReference>
<dbReference type="HOGENOM" id="CLU_053680_0_0_5"/>
<dbReference type="UniPathway" id="UPA00068">
    <property type="reaction ID" value="UER00107"/>
</dbReference>
<dbReference type="Proteomes" id="UP000006578">
    <property type="component" value="Chromosome"/>
</dbReference>
<dbReference type="GO" id="GO:0005737">
    <property type="term" value="C:cytoplasm"/>
    <property type="evidence" value="ECO:0007669"/>
    <property type="project" value="UniProtKB-SubCell"/>
</dbReference>
<dbReference type="GO" id="GO:0003991">
    <property type="term" value="F:acetylglutamate kinase activity"/>
    <property type="evidence" value="ECO:0007669"/>
    <property type="project" value="UniProtKB-UniRule"/>
</dbReference>
<dbReference type="GO" id="GO:0005524">
    <property type="term" value="F:ATP binding"/>
    <property type="evidence" value="ECO:0007669"/>
    <property type="project" value="UniProtKB-UniRule"/>
</dbReference>
<dbReference type="GO" id="GO:0042450">
    <property type="term" value="P:arginine biosynthetic process via ornithine"/>
    <property type="evidence" value="ECO:0007669"/>
    <property type="project" value="UniProtKB-UniRule"/>
</dbReference>
<dbReference type="GO" id="GO:0006526">
    <property type="term" value="P:L-arginine biosynthetic process"/>
    <property type="evidence" value="ECO:0007669"/>
    <property type="project" value="UniProtKB-UniPathway"/>
</dbReference>
<dbReference type="CDD" id="cd04250">
    <property type="entry name" value="AAK_NAGK-C"/>
    <property type="match status" value="1"/>
</dbReference>
<dbReference type="FunFam" id="3.40.1160.10:FF:000004">
    <property type="entry name" value="Acetylglutamate kinase"/>
    <property type="match status" value="1"/>
</dbReference>
<dbReference type="Gene3D" id="3.40.1160.10">
    <property type="entry name" value="Acetylglutamate kinase-like"/>
    <property type="match status" value="1"/>
</dbReference>
<dbReference type="HAMAP" id="MF_00082">
    <property type="entry name" value="ArgB"/>
    <property type="match status" value="1"/>
</dbReference>
<dbReference type="InterPro" id="IPR036393">
    <property type="entry name" value="AceGlu_kinase-like_sf"/>
</dbReference>
<dbReference type="InterPro" id="IPR004662">
    <property type="entry name" value="AcgluKinase_fam"/>
</dbReference>
<dbReference type="InterPro" id="IPR037528">
    <property type="entry name" value="ArgB"/>
</dbReference>
<dbReference type="InterPro" id="IPR001048">
    <property type="entry name" value="Asp/Glu/Uridylate_kinase"/>
</dbReference>
<dbReference type="InterPro" id="IPR001057">
    <property type="entry name" value="Glu/AcGlu_kinase"/>
</dbReference>
<dbReference type="InterPro" id="IPR041727">
    <property type="entry name" value="NAGK-C"/>
</dbReference>
<dbReference type="NCBIfam" id="TIGR00761">
    <property type="entry name" value="argB"/>
    <property type="match status" value="1"/>
</dbReference>
<dbReference type="PANTHER" id="PTHR23342">
    <property type="entry name" value="N-ACETYLGLUTAMATE SYNTHASE"/>
    <property type="match status" value="1"/>
</dbReference>
<dbReference type="PANTHER" id="PTHR23342:SF0">
    <property type="entry name" value="N-ACETYLGLUTAMATE SYNTHASE, MITOCHONDRIAL"/>
    <property type="match status" value="1"/>
</dbReference>
<dbReference type="Pfam" id="PF00696">
    <property type="entry name" value="AA_kinase"/>
    <property type="match status" value="1"/>
</dbReference>
<dbReference type="PIRSF" id="PIRSF000728">
    <property type="entry name" value="NAGK"/>
    <property type="match status" value="1"/>
</dbReference>
<dbReference type="PRINTS" id="PR00474">
    <property type="entry name" value="GLU5KINASE"/>
</dbReference>
<dbReference type="SUPFAM" id="SSF53633">
    <property type="entry name" value="Carbamate kinase-like"/>
    <property type="match status" value="1"/>
</dbReference>
<sequence length="302" mass="31189">MMTMADPSKMPDLLAKAETLVEALPYLQRYAGQTFVIKYGGHAMGDPEAQRDFAEDVVLLKAVGINPVVVHGGGPQIGAMLKQLGIESTFVGGLRVTDAATAEVAEMVLAGKINKEIVGWIAGLGGRAVGISGKDANLVLAEKVKRSEADPSSGIERHVDLGFVGEPVAVDPTILANLTNDNFIPVVAPVALGADGATYNINADTMAGAIAGALGAKRFFLLTDVAGVLDKSGALLTDLDRAAIDALKADDTITGGMIPKVETCVAAVDAGVEAAVILDGRIPHAMLLEIFTTRGAGTLIHR</sequence>
<protein>
    <recommendedName>
        <fullName evidence="1">Acetylglutamate kinase</fullName>
        <ecNumber evidence="1">2.7.2.8</ecNumber>
    </recommendedName>
    <alternativeName>
        <fullName evidence="1">N-acetyl-L-glutamate 5-phosphotransferase</fullName>
    </alternativeName>
    <alternativeName>
        <fullName evidence="1">NAG kinase</fullName>
        <shortName evidence="1">NAGK</shortName>
    </alternativeName>
</protein>